<protein>
    <recommendedName>
        <fullName>Glutaredoxin-C9</fullName>
    </recommendedName>
</protein>
<proteinExistence type="inferred from homology"/>
<gene>
    <name type="primary">GRXC9</name>
    <name type="ordered locus">Os07g0151100</name>
    <name type="ordered locus">LOC_Os07g05630</name>
    <name type="ORF">B1364A02.2</name>
    <name type="ORF">OJ1048_C10.3</name>
    <name evidence="4" type="ORF">OsJ_23111</name>
</gene>
<organism>
    <name type="scientific">Oryza sativa subsp. japonica</name>
    <name type="common">Rice</name>
    <dbReference type="NCBI Taxonomy" id="39947"/>
    <lineage>
        <taxon>Eukaryota</taxon>
        <taxon>Viridiplantae</taxon>
        <taxon>Streptophyta</taxon>
        <taxon>Embryophyta</taxon>
        <taxon>Tracheophyta</taxon>
        <taxon>Spermatophyta</taxon>
        <taxon>Magnoliopsida</taxon>
        <taxon>Liliopsida</taxon>
        <taxon>Poales</taxon>
        <taxon>Poaceae</taxon>
        <taxon>BOP clade</taxon>
        <taxon>Oryzoideae</taxon>
        <taxon>Oryzeae</taxon>
        <taxon>Oryzinae</taxon>
        <taxon>Oryza</taxon>
        <taxon>Oryza sativa</taxon>
    </lineage>
</organism>
<feature type="chain" id="PRO_0000269670" description="Glutaredoxin-C9">
    <location>
        <begin position="1"/>
        <end position="192"/>
    </location>
</feature>
<feature type="domain" description="Glutaredoxin" evidence="2">
    <location>
        <begin position="89"/>
        <end position="191"/>
    </location>
</feature>
<feature type="short sequence motif" description="Responsive for interaction with TGA factors" evidence="1">
    <location>
        <begin position="189"/>
        <end position="192"/>
    </location>
</feature>
<feature type="disulfide bond" description="Redox-active" evidence="1">
    <location>
        <begin position="109"/>
        <end position="112"/>
    </location>
</feature>
<accession>Q7XIZ1</accession>
<accession>A3BGM0</accession>
<reference key="1">
    <citation type="journal article" date="2005" name="Nature">
        <title>The map-based sequence of the rice genome.</title>
        <authorList>
            <consortium name="International rice genome sequencing project (IRGSP)"/>
        </authorList>
    </citation>
    <scope>NUCLEOTIDE SEQUENCE [LARGE SCALE GENOMIC DNA]</scope>
    <source>
        <strain>cv. Nipponbare</strain>
    </source>
</reference>
<reference key="2">
    <citation type="journal article" date="2013" name="Rice">
        <title>Improvement of the Oryza sativa Nipponbare reference genome using next generation sequence and optical map data.</title>
        <authorList>
            <person name="Kawahara Y."/>
            <person name="de la Bastide M."/>
            <person name="Hamilton J.P."/>
            <person name="Kanamori H."/>
            <person name="McCombie W.R."/>
            <person name="Ouyang S."/>
            <person name="Schwartz D.C."/>
            <person name="Tanaka T."/>
            <person name="Wu J."/>
            <person name="Zhou S."/>
            <person name="Childs K.L."/>
            <person name="Davidson R.M."/>
            <person name="Lin H."/>
            <person name="Quesada-Ocampo L."/>
            <person name="Vaillancourt B."/>
            <person name="Sakai H."/>
            <person name="Lee S.S."/>
            <person name="Kim J."/>
            <person name="Numa H."/>
            <person name="Itoh T."/>
            <person name="Buell C.R."/>
            <person name="Matsumoto T."/>
        </authorList>
    </citation>
    <scope>GENOME REANNOTATION</scope>
    <source>
        <strain>cv. Nipponbare</strain>
    </source>
</reference>
<reference key="3">
    <citation type="journal article" date="2005" name="PLoS Biol.">
        <title>The genomes of Oryza sativa: a history of duplications.</title>
        <authorList>
            <person name="Yu J."/>
            <person name="Wang J."/>
            <person name="Lin W."/>
            <person name="Li S."/>
            <person name="Li H."/>
            <person name="Zhou J."/>
            <person name="Ni P."/>
            <person name="Dong W."/>
            <person name="Hu S."/>
            <person name="Zeng C."/>
            <person name="Zhang J."/>
            <person name="Zhang Y."/>
            <person name="Li R."/>
            <person name="Xu Z."/>
            <person name="Li S."/>
            <person name="Li X."/>
            <person name="Zheng H."/>
            <person name="Cong L."/>
            <person name="Lin L."/>
            <person name="Yin J."/>
            <person name="Geng J."/>
            <person name="Li G."/>
            <person name="Shi J."/>
            <person name="Liu J."/>
            <person name="Lv H."/>
            <person name="Li J."/>
            <person name="Wang J."/>
            <person name="Deng Y."/>
            <person name="Ran L."/>
            <person name="Shi X."/>
            <person name="Wang X."/>
            <person name="Wu Q."/>
            <person name="Li C."/>
            <person name="Ren X."/>
            <person name="Wang J."/>
            <person name="Wang X."/>
            <person name="Li D."/>
            <person name="Liu D."/>
            <person name="Zhang X."/>
            <person name="Ji Z."/>
            <person name="Zhao W."/>
            <person name="Sun Y."/>
            <person name="Zhang Z."/>
            <person name="Bao J."/>
            <person name="Han Y."/>
            <person name="Dong L."/>
            <person name="Ji J."/>
            <person name="Chen P."/>
            <person name="Wu S."/>
            <person name="Liu J."/>
            <person name="Xiao Y."/>
            <person name="Bu D."/>
            <person name="Tan J."/>
            <person name="Yang L."/>
            <person name="Ye C."/>
            <person name="Zhang J."/>
            <person name="Xu J."/>
            <person name="Zhou Y."/>
            <person name="Yu Y."/>
            <person name="Zhang B."/>
            <person name="Zhuang S."/>
            <person name="Wei H."/>
            <person name="Liu B."/>
            <person name="Lei M."/>
            <person name="Yu H."/>
            <person name="Li Y."/>
            <person name="Xu H."/>
            <person name="Wei S."/>
            <person name="He X."/>
            <person name="Fang L."/>
            <person name="Zhang Z."/>
            <person name="Zhang Y."/>
            <person name="Huang X."/>
            <person name="Su Z."/>
            <person name="Tong W."/>
            <person name="Li J."/>
            <person name="Tong Z."/>
            <person name="Li S."/>
            <person name="Ye J."/>
            <person name="Wang L."/>
            <person name="Fang L."/>
            <person name="Lei T."/>
            <person name="Chen C.-S."/>
            <person name="Chen H.-C."/>
            <person name="Xu Z."/>
            <person name="Li H."/>
            <person name="Huang H."/>
            <person name="Zhang F."/>
            <person name="Xu H."/>
            <person name="Li N."/>
            <person name="Zhao C."/>
            <person name="Li S."/>
            <person name="Dong L."/>
            <person name="Huang Y."/>
            <person name="Li L."/>
            <person name="Xi Y."/>
            <person name="Qi Q."/>
            <person name="Li W."/>
            <person name="Zhang B."/>
            <person name="Hu W."/>
            <person name="Zhang Y."/>
            <person name="Tian X."/>
            <person name="Jiao Y."/>
            <person name="Liang X."/>
            <person name="Jin J."/>
            <person name="Gao L."/>
            <person name="Zheng W."/>
            <person name="Hao B."/>
            <person name="Liu S.-M."/>
            <person name="Wang W."/>
            <person name="Yuan L."/>
            <person name="Cao M."/>
            <person name="McDermott J."/>
            <person name="Samudrala R."/>
            <person name="Wang J."/>
            <person name="Wong G.K.-S."/>
            <person name="Yang H."/>
        </authorList>
    </citation>
    <scope>NUCLEOTIDE SEQUENCE [LARGE SCALE GENOMIC DNA]</scope>
    <source>
        <strain>cv. Nipponbare</strain>
    </source>
</reference>
<reference key="4">
    <citation type="journal article" date="2006" name="J. Exp. Bot.">
        <title>Genome-wide analysis of plant glutaredoxin systems.</title>
        <authorList>
            <person name="Rouhier N."/>
            <person name="Couturier J."/>
            <person name="Jacquot J.-P."/>
        </authorList>
    </citation>
    <scope>GENE FAMILY</scope>
</reference>
<evidence type="ECO:0000250" key="1"/>
<evidence type="ECO:0000255" key="2">
    <source>
        <dbReference type="PROSITE-ProRule" id="PRU00686"/>
    </source>
</evidence>
<evidence type="ECO:0000305" key="3"/>
<evidence type="ECO:0000312" key="4">
    <source>
        <dbReference type="EMBL" id="EAZ38709.1"/>
    </source>
</evidence>
<comment type="function">
    <text evidence="1">Has a glutathione-disulfide oxidoreductase activity in the presence of NADPH and glutathione reductase. Reduces low molecular weight disulfides and proteins (By similarity).</text>
</comment>
<comment type="subcellular location">
    <subcellularLocation>
        <location evidence="1">Cytoplasm</location>
    </subcellularLocation>
    <subcellularLocation>
        <location evidence="1">Nucleus</location>
    </subcellularLocation>
</comment>
<comment type="similarity">
    <text evidence="3">Belongs to the glutaredoxin family. CC-type subfamily.</text>
</comment>
<keyword id="KW-0963">Cytoplasm</keyword>
<keyword id="KW-1015">Disulfide bond</keyword>
<keyword id="KW-0249">Electron transport</keyword>
<keyword id="KW-0539">Nucleus</keyword>
<keyword id="KW-0676">Redox-active center</keyword>
<keyword id="KW-1185">Reference proteome</keyword>
<keyword id="KW-0813">Transport</keyword>
<name>GRXC9_ORYSJ</name>
<sequence>MSERVFAELATIHYQKSLPCRHSFDPPRTTPILHLYIIHLLLPPLIAIVCLCYIAIVPFEEEEERMRMQVVETAAVEEEEAAAAMMSVYERVARMASGNAVVVFSASGCCMCHVVKRLLLGLGVGPAVYELDQLAAAADIQAALSQLLPPGQPPVPVVFVGGRLLGGVEKVMACHINGTLVPLLKQAGALWL</sequence>
<dbReference type="EMBL" id="AP003704">
    <property type="protein sequence ID" value="BAC79508.1"/>
    <property type="molecule type" value="Genomic_DNA"/>
</dbReference>
<dbReference type="EMBL" id="AP006163">
    <property type="protein sequence ID" value="BAD31906.1"/>
    <property type="molecule type" value="Genomic_DNA"/>
</dbReference>
<dbReference type="EMBL" id="AP014963">
    <property type="protein sequence ID" value="BAT00081.1"/>
    <property type="molecule type" value="Genomic_DNA"/>
</dbReference>
<dbReference type="EMBL" id="CM000144">
    <property type="protein sequence ID" value="EAZ38709.1"/>
    <property type="molecule type" value="Genomic_DNA"/>
</dbReference>
<dbReference type="RefSeq" id="XP_015646393.1">
    <property type="nucleotide sequence ID" value="XM_015790907.1"/>
</dbReference>
<dbReference type="SMR" id="Q7XIZ1"/>
<dbReference type="FunCoup" id="Q7XIZ1">
    <property type="interactions" value="29"/>
</dbReference>
<dbReference type="STRING" id="39947.Q7XIZ1"/>
<dbReference type="PaxDb" id="39947-Q7XIZ1"/>
<dbReference type="EnsemblPlants" id="Os07t0151100-01">
    <property type="protein sequence ID" value="Os07t0151100-01"/>
    <property type="gene ID" value="Os07g0151100"/>
</dbReference>
<dbReference type="GeneID" id="107278423"/>
<dbReference type="Gramene" id="Os07t0151100-01">
    <property type="protein sequence ID" value="Os07t0151100-01"/>
    <property type="gene ID" value="Os07g0151100"/>
</dbReference>
<dbReference type="KEGG" id="osa:107278423"/>
<dbReference type="eggNOG" id="KOG1752">
    <property type="taxonomic scope" value="Eukaryota"/>
</dbReference>
<dbReference type="HOGENOM" id="CLU_026126_6_1_1"/>
<dbReference type="InParanoid" id="Q7XIZ1"/>
<dbReference type="OMA" id="AMMSVYE"/>
<dbReference type="OrthoDB" id="418495at2759"/>
<dbReference type="Proteomes" id="UP000000763">
    <property type="component" value="Chromosome 7"/>
</dbReference>
<dbReference type="Proteomes" id="UP000007752">
    <property type="component" value="Chromosome 7"/>
</dbReference>
<dbReference type="Proteomes" id="UP000059680">
    <property type="component" value="Chromosome 7"/>
</dbReference>
<dbReference type="ExpressionAtlas" id="Q7XIZ1">
    <property type="expression patterns" value="baseline"/>
</dbReference>
<dbReference type="GO" id="GO:0005737">
    <property type="term" value="C:cytoplasm"/>
    <property type="evidence" value="ECO:0007669"/>
    <property type="project" value="UniProtKB-SubCell"/>
</dbReference>
<dbReference type="GO" id="GO:0005634">
    <property type="term" value="C:nucleus"/>
    <property type="evidence" value="ECO:0007669"/>
    <property type="project" value="UniProtKB-SubCell"/>
</dbReference>
<dbReference type="Gene3D" id="3.40.30.10">
    <property type="entry name" value="Glutaredoxin"/>
    <property type="match status" value="1"/>
</dbReference>
<dbReference type="InterPro" id="IPR011905">
    <property type="entry name" value="GlrX-like_pln_2"/>
</dbReference>
<dbReference type="InterPro" id="IPR002109">
    <property type="entry name" value="Glutaredoxin"/>
</dbReference>
<dbReference type="InterPro" id="IPR036249">
    <property type="entry name" value="Thioredoxin-like_sf"/>
</dbReference>
<dbReference type="NCBIfam" id="TIGR02189">
    <property type="entry name" value="GlrX-like_plant"/>
    <property type="match status" value="1"/>
</dbReference>
<dbReference type="PANTHER" id="PTHR10168">
    <property type="entry name" value="GLUTAREDOXIN"/>
    <property type="match status" value="1"/>
</dbReference>
<dbReference type="Pfam" id="PF00462">
    <property type="entry name" value="Glutaredoxin"/>
    <property type="match status" value="1"/>
</dbReference>
<dbReference type="SUPFAM" id="SSF52833">
    <property type="entry name" value="Thioredoxin-like"/>
    <property type="match status" value="1"/>
</dbReference>
<dbReference type="PROSITE" id="PS51354">
    <property type="entry name" value="GLUTAREDOXIN_2"/>
    <property type="match status" value="1"/>
</dbReference>